<dbReference type="EMBL" id="AJ279423">
    <property type="protein sequence ID" value="CAB65741.1"/>
    <property type="molecule type" value="Genomic_DNA"/>
</dbReference>
<dbReference type="SMR" id="Q9T6J0"/>
<dbReference type="GO" id="GO:0005743">
    <property type="term" value="C:mitochondrial inner membrane"/>
    <property type="evidence" value="ECO:0007669"/>
    <property type="project" value="UniProtKB-SubCell"/>
</dbReference>
<dbReference type="GO" id="GO:0045275">
    <property type="term" value="C:respiratory chain complex III"/>
    <property type="evidence" value="ECO:0007669"/>
    <property type="project" value="InterPro"/>
</dbReference>
<dbReference type="GO" id="GO:0046872">
    <property type="term" value="F:metal ion binding"/>
    <property type="evidence" value="ECO:0007669"/>
    <property type="project" value="UniProtKB-KW"/>
</dbReference>
<dbReference type="GO" id="GO:0008121">
    <property type="term" value="F:ubiquinol-cytochrome-c reductase activity"/>
    <property type="evidence" value="ECO:0007669"/>
    <property type="project" value="InterPro"/>
</dbReference>
<dbReference type="GO" id="GO:0006122">
    <property type="term" value="P:mitochondrial electron transport, ubiquinol to cytochrome c"/>
    <property type="evidence" value="ECO:0007669"/>
    <property type="project" value="TreeGrafter"/>
</dbReference>
<dbReference type="CDD" id="cd00290">
    <property type="entry name" value="cytochrome_b_C"/>
    <property type="match status" value="1"/>
</dbReference>
<dbReference type="CDD" id="cd00284">
    <property type="entry name" value="Cytochrome_b_N"/>
    <property type="match status" value="1"/>
</dbReference>
<dbReference type="FunFam" id="1.20.810.10:FF:000002">
    <property type="entry name" value="Cytochrome b"/>
    <property type="match status" value="1"/>
</dbReference>
<dbReference type="Gene3D" id="1.20.810.10">
    <property type="entry name" value="Cytochrome Bc1 Complex, Chain C"/>
    <property type="match status" value="1"/>
</dbReference>
<dbReference type="InterPro" id="IPR005798">
    <property type="entry name" value="Cyt_b/b6_C"/>
</dbReference>
<dbReference type="InterPro" id="IPR036150">
    <property type="entry name" value="Cyt_b/b6_C_sf"/>
</dbReference>
<dbReference type="InterPro" id="IPR005797">
    <property type="entry name" value="Cyt_b/b6_N"/>
</dbReference>
<dbReference type="InterPro" id="IPR027387">
    <property type="entry name" value="Cytb/b6-like_sf"/>
</dbReference>
<dbReference type="InterPro" id="IPR030689">
    <property type="entry name" value="Cytochrome_b"/>
</dbReference>
<dbReference type="InterPro" id="IPR048260">
    <property type="entry name" value="Cytochrome_b_C_euk/bac"/>
</dbReference>
<dbReference type="InterPro" id="IPR048259">
    <property type="entry name" value="Cytochrome_b_N_euk/bac"/>
</dbReference>
<dbReference type="InterPro" id="IPR016174">
    <property type="entry name" value="Di-haem_cyt_TM"/>
</dbReference>
<dbReference type="PANTHER" id="PTHR19271">
    <property type="entry name" value="CYTOCHROME B"/>
    <property type="match status" value="1"/>
</dbReference>
<dbReference type="PANTHER" id="PTHR19271:SF16">
    <property type="entry name" value="CYTOCHROME B"/>
    <property type="match status" value="1"/>
</dbReference>
<dbReference type="Pfam" id="PF00032">
    <property type="entry name" value="Cytochrom_B_C"/>
    <property type="match status" value="1"/>
</dbReference>
<dbReference type="Pfam" id="PF00033">
    <property type="entry name" value="Cytochrome_B"/>
    <property type="match status" value="1"/>
</dbReference>
<dbReference type="PIRSF" id="PIRSF038885">
    <property type="entry name" value="COB"/>
    <property type="match status" value="1"/>
</dbReference>
<dbReference type="SUPFAM" id="SSF81648">
    <property type="entry name" value="a domain/subunit of cytochrome bc1 complex (Ubiquinol-cytochrome c reductase)"/>
    <property type="match status" value="1"/>
</dbReference>
<dbReference type="SUPFAM" id="SSF81342">
    <property type="entry name" value="Transmembrane di-heme cytochromes"/>
    <property type="match status" value="1"/>
</dbReference>
<dbReference type="PROSITE" id="PS51003">
    <property type="entry name" value="CYTB_CTER"/>
    <property type="match status" value="1"/>
</dbReference>
<dbReference type="PROSITE" id="PS51002">
    <property type="entry name" value="CYTB_NTER"/>
    <property type="match status" value="1"/>
</dbReference>
<reference key="1">
    <citation type="submission" date="2000-01" db="EMBL/GenBank/DDBJ databases">
        <title>Molecular phylogeny of Chinese hare (Lepus) inferred from mitochondrial Cytochrome b and control region sequences.</title>
        <authorList>
            <person name="Wu C."/>
            <person name="Zhang Y."/>
        </authorList>
    </citation>
    <scope>NUCLEOTIDE SEQUENCE [GENOMIC DNA]</scope>
</reference>
<organism>
    <name type="scientific">Lepus mandshuricus</name>
    <name type="common">Manchurian hare</name>
    <name type="synonym">Lepus melainus</name>
    <dbReference type="NCBI Taxonomy" id="112021"/>
    <lineage>
        <taxon>Eukaryota</taxon>
        <taxon>Metazoa</taxon>
        <taxon>Chordata</taxon>
        <taxon>Craniata</taxon>
        <taxon>Vertebrata</taxon>
        <taxon>Euteleostomi</taxon>
        <taxon>Mammalia</taxon>
        <taxon>Eutheria</taxon>
        <taxon>Euarchontoglires</taxon>
        <taxon>Glires</taxon>
        <taxon>Lagomorpha</taxon>
        <taxon>Leporidae</taxon>
        <taxon>Lepus</taxon>
    </lineage>
</organism>
<accession>Q9T6J0</accession>
<proteinExistence type="inferred from homology"/>
<geneLocation type="mitochondrion"/>
<comment type="function">
    <text evidence="2">Component of the ubiquinol-cytochrome c reductase complex (complex III or cytochrome b-c1 complex) that is part of the mitochondrial respiratory chain. The b-c1 complex mediates electron transfer from ubiquinol to cytochrome c. Contributes to the generation of a proton gradient across the mitochondrial membrane that is then used for ATP synthesis.</text>
</comment>
<comment type="cofactor">
    <cofactor evidence="2">
        <name>heme b</name>
        <dbReference type="ChEBI" id="CHEBI:60344"/>
    </cofactor>
    <text evidence="2">Binds 2 heme b groups non-covalently.</text>
</comment>
<comment type="subunit">
    <text evidence="2">The cytochrome bc1 complex contains 11 subunits: 3 respiratory subunits (MT-CYB, CYC1 and UQCRFS1), 2 core proteins (UQCRC1 and UQCRC2) and 6 low-molecular weight proteins (UQCRH/QCR6, UQCRB/QCR7, UQCRQ/QCR8, UQCR10/QCR9, UQCR11/QCR10 and a cleavage product of UQCRFS1). This cytochrome bc1 complex then forms a dimer.</text>
</comment>
<comment type="subcellular location">
    <subcellularLocation>
        <location evidence="2">Mitochondrion inner membrane</location>
        <topology evidence="2">Multi-pass membrane protein</topology>
    </subcellularLocation>
</comment>
<comment type="miscellaneous">
    <text evidence="1">Heme 1 (or BL or b562) is low-potential and absorbs at about 562 nm, and heme 2 (or BH or b566) is high-potential and absorbs at about 566 nm.</text>
</comment>
<comment type="similarity">
    <text evidence="3 4">Belongs to the cytochrome b family.</text>
</comment>
<comment type="caution">
    <text evidence="2">The full-length protein contains only eight transmembrane helices, not nine as predicted by bioinformatics tools.</text>
</comment>
<sequence length="379" mass="42906">MTNIRKTHPLLKIVNHSLIDLPAPSNISAWWNFGSLLGLCLMIQILTGLFLAMHYTSDTATAFSSVTHICRDVNYGWLIRYLHANGASMFFICLYMHVGRGIYYGSYTYLETWNIGIILLFAVMATAFMGYVLPWGQMSFWGATVITNLLSAIPYIGTTLVEWIWGGFSVDKATLTRFFAFHFILPFIIAALVMIHLLFLHETGSNNPSGIPWDSDKIPFHPYYTIKDLLGFLVLILLLMLLVLFSPDLLGDPDNYTPANPLNTPPHIKPEWYFLFAYAILRSIPNKLGGVLALVMSILILAIIPFLHMSKQRSMMFRPISQVLFWILIADLLTLTWIGGQPVEHPFITIGQVASILYFSIILILMPLASLIENKILKW</sequence>
<feature type="chain" id="PRO_0000061106" description="Cytochrome b">
    <location>
        <begin position="1"/>
        <end position="379"/>
    </location>
</feature>
<feature type="transmembrane region" description="Helical" evidence="2">
    <location>
        <begin position="33"/>
        <end position="53"/>
    </location>
</feature>
<feature type="transmembrane region" description="Helical" evidence="2">
    <location>
        <begin position="77"/>
        <end position="98"/>
    </location>
</feature>
<feature type="transmembrane region" description="Helical" evidence="2">
    <location>
        <begin position="113"/>
        <end position="133"/>
    </location>
</feature>
<feature type="transmembrane region" description="Helical" evidence="2">
    <location>
        <begin position="178"/>
        <end position="198"/>
    </location>
</feature>
<feature type="transmembrane region" description="Helical" evidence="2">
    <location>
        <begin position="226"/>
        <end position="246"/>
    </location>
</feature>
<feature type="transmembrane region" description="Helical" evidence="2">
    <location>
        <begin position="288"/>
        <end position="308"/>
    </location>
</feature>
<feature type="transmembrane region" description="Helical" evidence="2">
    <location>
        <begin position="320"/>
        <end position="340"/>
    </location>
</feature>
<feature type="transmembrane region" description="Helical" evidence="2">
    <location>
        <begin position="347"/>
        <end position="367"/>
    </location>
</feature>
<feature type="binding site" description="axial binding residue" evidence="2">
    <location>
        <position position="83"/>
    </location>
    <ligand>
        <name>heme b</name>
        <dbReference type="ChEBI" id="CHEBI:60344"/>
        <label>b562</label>
    </ligand>
    <ligandPart>
        <name>Fe</name>
        <dbReference type="ChEBI" id="CHEBI:18248"/>
    </ligandPart>
</feature>
<feature type="binding site" description="axial binding residue" evidence="2">
    <location>
        <position position="97"/>
    </location>
    <ligand>
        <name>heme b</name>
        <dbReference type="ChEBI" id="CHEBI:60344"/>
        <label>b566</label>
    </ligand>
    <ligandPart>
        <name>Fe</name>
        <dbReference type="ChEBI" id="CHEBI:18248"/>
    </ligandPart>
</feature>
<feature type="binding site" description="axial binding residue" evidence="2">
    <location>
        <position position="182"/>
    </location>
    <ligand>
        <name>heme b</name>
        <dbReference type="ChEBI" id="CHEBI:60344"/>
        <label>b562</label>
    </ligand>
    <ligandPart>
        <name>Fe</name>
        <dbReference type="ChEBI" id="CHEBI:18248"/>
    </ligandPart>
</feature>
<feature type="binding site" description="axial binding residue" evidence="2">
    <location>
        <position position="196"/>
    </location>
    <ligand>
        <name>heme b</name>
        <dbReference type="ChEBI" id="CHEBI:60344"/>
        <label>b566</label>
    </ligand>
    <ligandPart>
        <name>Fe</name>
        <dbReference type="ChEBI" id="CHEBI:18248"/>
    </ligandPart>
</feature>
<feature type="binding site" evidence="2">
    <location>
        <position position="201"/>
    </location>
    <ligand>
        <name>a ubiquinone</name>
        <dbReference type="ChEBI" id="CHEBI:16389"/>
    </ligand>
</feature>
<keyword id="KW-0249">Electron transport</keyword>
<keyword id="KW-0349">Heme</keyword>
<keyword id="KW-0408">Iron</keyword>
<keyword id="KW-0472">Membrane</keyword>
<keyword id="KW-0479">Metal-binding</keyword>
<keyword id="KW-0496">Mitochondrion</keyword>
<keyword id="KW-0999">Mitochondrion inner membrane</keyword>
<keyword id="KW-0679">Respiratory chain</keyword>
<keyword id="KW-0812">Transmembrane</keyword>
<keyword id="KW-1133">Transmembrane helix</keyword>
<keyword id="KW-0813">Transport</keyword>
<keyword id="KW-0830">Ubiquinone</keyword>
<evidence type="ECO:0000250" key="1"/>
<evidence type="ECO:0000250" key="2">
    <source>
        <dbReference type="UniProtKB" id="P00157"/>
    </source>
</evidence>
<evidence type="ECO:0000255" key="3">
    <source>
        <dbReference type="PROSITE-ProRule" id="PRU00967"/>
    </source>
</evidence>
<evidence type="ECO:0000255" key="4">
    <source>
        <dbReference type="PROSITE-ProRule" id="PRU00968"/>
    </source>
</evidence>
<gene>
    <name type="primary">MT-CYB</name>
    <name type="synonym">COB</name>
    <name type="synonym">CYTB</name>
    <name type="synonym">MTCYB</name>
</gene>
<protein>
    <recommendedName>
        <fullName>Cytochrome b</fullName>
    </recommendedName>
    <alternativeName>
        <fullName>Complex III subunit 3</fullName>
    </alternativeName>
    <alternativeName>
        <fullName>Complex III subunit III</fullName>
    </alternativeName>
    <alternativeName>
        <fullName>Cytochrome b-c1 complex subunit 3</fullName>
    </alternativeName>
    <alternativeName>
        <fullName>Ubiquinol-cytochrome-c reductase complex cytochrome b subunit</fullName>
    </alternativeName>
</protein>
<name>CYB_LEPMN</name>